<organism>
    <name type="scientific">Salmonella typhi</name>
    <dbReference type="NCBI Taxonomy" id="90370"/>
    <lineage>
        <taxon>Bacteria</taxon>
        <taxon>Pseudomonadati</taxon>
        <taxon>Pseudomonadota</taxon>
        <taxon>Gammaproteobacteria</taxon>
        <taxon>Enterobacterales</taxon>
        <taxon>Enterobacteriaceae</taxon>
        <taxon>Salmonella</taxon>
    </lineage>
</organism>
<comment type="function">
    <text evidence="1">Catalyzes the NADPH-dependent reduction of N-acetyl-5-glutamyl phosphate to yield N-acetyl-L-glutamate 5-semialdehyde.</text>
</comment>
<comment type="catalytic activity">
    <reaction evidence="1">
        <text>N-acetyl-L-glutamate 5-semialdehyde + phosphate + NADP(+) = N-acetyl-L-glutamyl 5-phosphate + NADPH + H(+)</text>
        <dbReference type="Rhea" id="RHEA:21588"/>
        <dbReference type="ChEBI" id="CHEBI:15378"/>
        <dbReference type="ChEBI" id="CHEBI:29123"/>
        <dbReference type="ChEBI" id="CHEBI:43474"/>
        <dbReference type="ChEBI" id="CHEBI:57783"/>
        <dbReference type="ChEBI" id="CHEBI:57936"/>
        <dbReference type="ChEBI" id="CHEBI:58349"/>
        <dbReference type="EC" id="1.2.1.38"/>
    </reaction>
</comment>
<comment type="pathway">
    <text evidence="1">Amino-acid biosynthesis; L-arginine biosynthesis; N(2)-acetyl-L-ornithine from L-glutamate: step 3/4.</text>
</comment>
<comment type="subcellular location">
    <subcellularLocation>
        <location evidence="1">Cytoplasm</location>
    </subcellularLocation>
</comment>
<comment type="similarity">
    <text evidence="1">Belongs to the NAGSA dehydrogenase family. Type 1 subfamily.</text>
</comment>
<proteinExistence type="inferred from homology"/>
<accession>Q8Z309</accession>
<reference key="1">
    <citation type="journal article" date="2001" name="Nature">
        <title>Complete genome sequence of a multiple drug resistant Salmonella enterica serovar Typhi CT18.</title>
        <authorList>
            <person name="Parkhill J."/>
            <person name="Dougan G."/>
            <person name="James K.D."/>
            <person name="Thomson N.R."/>
            <person name="Pickard D."/>
            <person name="Wain J."/>
            <person name="Churcher C.M."/>
            <person name="Mungall K.L."/>
            <person name="Bentley S.D."/>
            <person name="Holden M.T.G."/>
            <person name="Sebaihia M."/>
            <person name="Baker S."/>
            <person name="Basham D."/>
            <person name="Brooks K."/>
            <person name="Chillingworth T."/>
            <person name="Connerton P."/>
            <person name="Cronin A."/>
            <person name="Davis P."/>
            <person name="Davies R.M."/>
            <person name="Dowd L."/>
            <person name="White N."/>
            <person name="Farrar J."/>
            <person name="Feltwell T."/>
            <person name="Hamlin N."/>
            <person name="Haque A."/>
            <person name="Hien T.T."/>
            <person name="Holroyd S."/>
            <person name="Jagels K."/>
            <person name="Krogh A."/>
            <person name="Larsen T.S."/>
            <person name="Leather S."/>
            <person name="Moule S."/>
            <person name="O'Gaora P."/>
            <person name="Parry C."/>
            <person name="Quail M.A."/>
            <person name="Rutherford K.M."/>
            <person name="Simmonds M."/>
            <person name="Skelton J."/>
            <person name="Stevens K."/>
            <person name="Whitehead S."/>
            <person name="Barrell B.G."/>
        </authorList>
    </citation>
    <scope>NUCLEOTIDE SEQUENCE [LARGE SCALE GENOMIC DNA]</scope>
    <source>
        <strain>CT18</strain>
    </source>
</reference>
<reference key="2">
    <citation type="journal article" date="2003" name="J. Bacteriol.">
        <title>Comparative genomics of Salmonella enterica serovar Typhi strains Ty2 and CT18.</title>
        <authorList>
            <person name="Deng W."/>
            <person name="Liou S.-R."/>
            <person name="Plunkett G. III"/>
            <person name="Mayhew G.F."/>
            <person name="Rose D.J."/>
            <person name="Burland V."/>
            <person name="Kodoyianni V."/>
            <person name="Schwartz D.C."/>
            <person name="Blattner F.R."/>
        </authorList>
    </citation>
    <scope>NUCLEOTIDE SEQUENCE [LARGE SCALE GENOMIC DNA]</scope>
    <source>
        <strain>ATCC 700931 / Ty2</strain>
    </source>
</reference>
<evidence type="ECO:0000255" key="1">
    <source>
        <dbReference type="HAMAP-Rule" id="MF_00150"/>
    </source>
</evidence>
<feature type="chain" id="PRO_0000112443" description="N-acetyl-gamma-glutamyl-phosphate reductase">
    <location>
        <begin position="1"/>
        <end position="334"/>
    </location>
</feature>
<feature type="active site" evidence="1">
    <location>
        <position position="154"/>
    </location>
</feature>
<sequence>MLNTLIVGASGYAGAELVSYVNRHPHMTITALTVSAQSNDAGKLISDLHPQLKGIVDLPLQPMSDVRDFSADVDVVFLATAHEVSHDLAPQFLQAGCVVFDLSGAFRVNDRAFYEKYYGFTHQYPELLEQAVYGLAEWNADKLNTANLIAVPGCYPTAAQLSLKPLIDGGLLDLTQWPVINATSGVSGAGRKAAISNSFCEVSLQPYGVFTHRHQPEIAAHLGAEVIFTPHLGNFPRGILETITCRLKAGVTHAQVADVLQKAYGDKPLVRLYDKGVPALKNVVGLPFCDIGFAVQGEHLIVVATEDNLLKGAAAQAVQCANIRFGFAETQSLI</sequence>
<dbReference type="EC" id="1.2.1.38" evidence="1"/>
<dbReference type="EMBL" id="AL513382">
    <property type="protein sequence ID" value="CAD09508.1"/>
    <property type="molecule type" value="Genomic_DNA"/>
</dbReference>
<dbReference type="EMBL" id="AE014613">
    <property type="protein sequence ID" value="AAO71011.1"/>
    <property type="molecule type" value="Genomic_DNA"/>
</dbReference>
<dbReference type="RefSeq" id="NP_457938.1">
    <property type="nucleotide sequence ID" value="NC_003198.1"/>
</dbReference>
<dbReference type="RefSeq" id="WP_000935332.1">
    <property type="nucleotide sequence ID" value="NZ_WSUR01000010.1"/>
</dbReference>
<dbReference type="SMR" id="Q8Z309"/>
<dbReference type="STRING" id="220341.gene:17587619"/>
<dbReference type="KEGG" id="stt:t3503"/>
<dbReference type="KEGG" id="sty:STY3752"/>
<dbReference type="PATRIC" id="fig|220341.7.peg.3827"/>
<dbReference type="eggNOG" id="COG0002">
    <property type="taxonomic scope" value="Bacteria"/>
</dbReference>
<dbReference type="HOGENOM" id="CLU_006384_0_1_6"/>
<dbReference type="OMA" id="PHLTPMI"/>
<dbReference type="OrthoDB" id="9801289at2"/>
<dbReference type="UniPathway" id="UPA00068">
    <property type="reaction ID" value="UER00108"/>
</dbReference>
<dbReference type="Proteomes" id="UP000000541">
    <property type="component" value="Chromosome"/>
</dbReference>
<dbReference type="Proteomes" id="UP000002670">
    <property type="component" value="Chromosome"/>
</dbReference>
<dbReference type="GO" id="GO:0005737">
    <property type="term" value="C:cytoplasm"/>
    <property type="evidence" value="ECO:0007669"/>
    <property type="project" value="UniProtKB-SubCell"/>
</dbReference>
<dbReference type="GO" id="GO:0003942">
    <property type="term" value="F:N-acetyl-gamma-glutamyl-phosphate reductase activity"/>
    <property type="evidence" value="ECO:0007669"/>
    <property type="project" value="UniProtKB-UniRule"/>
</dbReference>
<dbReference type="GO" id="GO:0051287">
    <property type="term" value="F:NAD binding"/>
    <property type="evidence" value="ECO:0007669"/>
    <property type="project" value="InterPro"/>
</dbReference>
<dbReference type="GO" id="GO:0070401">
    <property type="term" value="F:NADP+ binding"/>
    <property type="evidence" value="ECO:0007669"/>
    <property type="project" value="InterPro"/>
</dbReference>
<dbReference type="GO" id="GO:0006526">
    <property type="term" value="P:L-arginine biosynthetic process"/>
    <property type="evidence" value="ECO:0007669"/>
    <property type="project" value="UniProtKB-UniRule"/>
</dbReference>
<dbReference type="CDD" id="cd23934">
    <property type="entry name" value="AGPR_1_C"/>
    <property type="match status" value="1"/>
</dbReference>
<dbReference type="CDD" id="cd17895">
    <property type="entry name" value="AGPR_1_N"/>
    <property type="match status" value="1"/>
</dbReference>
<dbReference type="FunFam" id="3.30.360.10:FF:000014">
    <property type="entry name" value="N-acetyl-gamma-glutamyl-phosphate reductase"/>
    <property type="match status" value="1"/>
</dbReference>
<dbReference type="FunFam" id="3.40.50.720:FF:000117">
    <property type="entry name" value="N-acetyl-gamma-glutamyl-phosphate reductase"/>
    <property type="match status" value="1"/>
</dbReference>
<dbReference type="Gene3D" id="3.30.360.10">
    <property type="entry name" value="Dihydrodipicolinate Reductase, domain 2"/>
    <property type="match status" value="1"/>
</dbReference>
<dbReference type="Gene3D" id="3.40.50.720">
    <property type="entry name" value="NAD(P)-binding Rossmann-like Domain"/>
    <property type="match status" value="1"/>
</dbReference>
<dbReference type="HAMAP" id="MF_00150">
    <property type="entry name" value="ArgC_type1"/>
    <property type="match status" value="1"/>
</dbReference>
<dbReference type="InterPro" id="IPR023013">
    <property type="entry name" value="AGPR_AS"/>
</dbReference>
<dbReference type="InterPro" id="IPR000706">
    <property type="entry name" value="AGPR_type-1"/>
</dbReference>
<dbReference type="InterPro" id="IPR036291">
    <property type="entry name" value="NAD(P)-bd_dom_sf"/>
</dbReference>
<dbReference type="InterPro" id="IPR050085">
    <property type="entry name" value="NAGSA_dehydrogenase"/>
</dbReference>
<dbReference type="InterPro" id="IPR000534">
    <property type="entry name" value="Semialdehyde_DH_NAD-bd"/>
</dbReference>
<dbReference type="NCBIfam" id="TIGR01850">
    <property type="entry name" value="argC"/>
    <property type="match status" value="1"/>
</dbReference>
<dbReference type="PANTHER" id="PTHR32338:SF10">
    <property type="entry name" value="N-ACETYL-GAMMA-GLUTAMYL-PHOSPHATE REDUCTASE, CHLOROPLASTIC-RELATED"/>
    <property type="match status" value="1"/>
</dbReference>
<dbReference type="PANTHER" id="PTHR32338">
    <property type="entry name" value="N-ACETYL-GAMMA-GLUTAMYL-PHOSPHATE REDUCTASE, CHLOROPLASTIC-RELATED-RELATED"/>
    <property type="match status" value="1"/>
</dbReference>
<dbReference type="Pfam" id="PF01118">
    <property type="entry name" value="Semialdhyde_dh"/>
    <property type="match status" value="1"/>
</dbReference>
<dbReference type="Pfam" id="PF22698">
    <property type="entry name" value="Semialdhyde_dhC_1"/>
    <property type="match status" value="1"/>
</dbReference>
<dbReference type="SMART" id="SM00859">
    <property type="entry name" value="Semialdhyde_dh"/>
    <property type="match status" value="1"/>
</dbReference>
<dbReference type="SUPFAM" id="SSF55347">
    <property type="entry name" value="Glyceraldehyde-3-phosphate dehydrogenase-like, C-terminal domain"/>
    <property type="match status" value="1"/>
</dbReference>
<dbReference type="SUPFAM" id="SSF51735">
    <property type="entry name" value="NAD(P)-binding Rossmann-fold domains"/>
    <property type="match status" value="1"/>
</dbReference>
<dbReference type="PROSITE" id="PS01224">
    <property type="entry name" value="ARGC"/>
    <property type="match status" value="1"/>
</dbReference>
<name>ARGC_SALTI</name>
<gene>
    <name evidence="1" type="primary">argC</name>
    <name type="ordered locus">STY3752</name>
    <name type="ordered locus">t3503</name>
</gene>
<keyword id="KW-0028">Amino-acid biosynthesis</keyword>
<keyword id="KW-0055">Arginine biosynthesis</keyword>
<keyword id="KW-0963">Cytoplasm</keyword>
<keyword id="KW-0521">NADP</keyword>
<keyword id="KW-0560">Oxidoreductase</keyword>
<protein>
    <recommendedName>
        <fullName evidence="1">N-acetyl-gamma-glutamyl-phosphate reductase</fullName>
        <shortName evidence="1">AGPR</shortName>
        <ecNumber evidence="1">1.2.1.38</ecNumber>
    </recommendedName>
    <alternativeName>
        <fullName evidence="1">N-acetyl-glutamate semialdehyde dehydrogenase</fullName>
        <shortName evidence="1">NAGSA dehydrogenase</shortName>
    </alternativeName>
</protein>